<gene>
    <name evidence="1" type="primary">glgA</name>
    <name type="ordered locus">Cvib_0286</name>
</gene>
<feature type="chain" id="PRO_1000081329" description="Glycogen synthase">
    <location>
        <begin position="1"/>
        <end position="489"/>
    </location>
</feature>
<feature type="binding site" evidence="1">
    <location>
        <position position="20"/>
    </location>
    <ligand>
        <name>ADP-alpha-D-glucose</name>
        <dbReference type="ChEBI" id="CHEBI:57498"/>
    </ligand>
</feature>
<reference key="1">
    <citation type="submission" date="2007-03" db="EMBL/GenBank/DDBJ databases">
        <title>Complete sequence of Prosthecochloris vibrioformis DSM 265.</title>
        <authorList>
            <consortium name="US DOE Joint Genome Institute"/>
            <person name="Copeland A."/>
            <person name="Lucas S."/>
            <person name="Lapidus A."/>
            <person name="Barry K."/>
            <person name="Detter J.C."/>
            <person name="Glavina del Rio T."/>
            <person name="Hammon N."/>
            <person name="Israni S."/>
            <person name="Pitluck S."/>
            <person name="Schmutz J."/>
            <person name="Larimer F."/>
            <person name="Land M."/>
            <person name="Hauser L."/>
            <person name="Mikhailova N."/>
            <person name="Li T."/>
            <person name="Overmann J."/>
            <person name="Schuster S.C."/>
            <person name="Bryant D.A."/>
            <person name="Richardson P."/>
        </authorList>
    </citation>
    <scope>NUCLEOTIDE SEQUENCE [LARGE SCALE GENOMIC DNA]</scope>
    <source>
        <strain>DSM 265 / 1930</strain>
    </source>
</reference>
<name>GLGA_CHLPM</name>
<accession>A4SCU9</accession>
<organism>
    <name type="scientific">Chlorobium phaeovibrioides (strain DSM 265 / 1930)</name>
    <name type="common">Prosthecochloris vibrioformis (strain DSM 265)</name>
    <dbReference type="NCBI Taxonomy" id="290318"/>
    <lineage>
        <taxon>Bacteria</taxon>
        <taxon>Pseudomonadati</taxon>
        <taxon>Chlorobiota</taxon>
        <taxon>Chlorobiia</taxon>
        <taxon>Chlorobiales</taxon>
        <taxon>Chlorobiaceae</taxon>
        <taxon>Chlorobium/Pelodictyon group</taxon>
        <taxon>Chlorobium</taxon>
    </lineage>
</organism>
<sequence length="489" mass="55111">MSRRNFKVLYISGEVSPFVRTSALADFMASFPQALEEEGFEARIMMPKYGAINDRKFRLHDVLRLSDIEVPLKEKTDLLNVKVTALPSSKIQTYFLYNEKYFKRNGLFTDTPVQGELKALAEKVAFFNVGVLETLQRLGWRPDIIHCHDWYASLVPLLLKTVYRDHEFFRGIKTAMTIHNVYRQGVLPFKVLKKLLPDEVCSELHRSGDDVNMLYTGVEHADMLTTTSPSYAEEITGEAGNAFGLSEVLGERNMTLHGIVNGIDTRQWNPSTDKLIKKRYAPERMEGKTENKRALLEEIKLSPDTDRPVVGVIINFDEFQGAGLIAGSLKKLAAMDIQLVICGSGDQKYEKQFREFADAHPETVSLHTDCPDSFIHLAIAGFDILLMPGKIESCGMLQMFAMSYGTIPVAFAGGGIVETIDDYSEKDGYGFIFHDYTPKALVARLGAAVALYHDSERWKEIVGRAMARDFGWKHSAEEYGGLYRELLES</sequence>
<comment type="function">
    <text evidence="1">Synthesizes alpha-1,4-glucan chains using ADP-glucose.</text>
</comment>
<comment type="catalytic activity">
    <reaction evidence="1">
        <text>[(1-&gt;4)-alpha-D-glucosyl](n) + ADP-alpha-D-glucose = [(1-&gt;4)-alpha-D-glucosyl](n+1) + ADP + H(+)</text>
        <dbReference type="Rhea" id="RHEA:18189"/>
        <dbReference type="Rhea" id="RHEA-COMP:9584"/>
        <dbReference type="Rhea" id="RHEA-COMP:9587"/>
        <dbReference type="ChEBI" id="CHEBI:15378"/>
        <dbReference type="ChEBI" id="CHEBI:15444"/>
        <dbReference type="ChEBI" id="CHEBI:57498"/>
        <dbReference type="ChEBI" id="CHEBI:456216"/>
        <dbReference type="EC" id="2.4.1.21"/>
    </reaction>
</comment>
<comment type="pathway">
    <text evidence="1">Glycan biosynthesis; glycogen biosynthesis.</text>
</comment>
<comment type="similarity">
    <text evidence="1">Belongs to the glycosyltransferase 1 family. Bacterial/plant glycogen synthase subfamily.</text>
</comment>
<protein>
    <recommendedName>
        <fullName evidence="1">Glycogen synthase</fullName>
        <ecNumber evidence="1">2.4.1.21</ecNumber>
    </recommendedName>
    <alternativeName>
        <fullName evidence="1">Starch [bacterial glycogen] synthase</fullName>
    </alternativeName>
</protein>
<dbReference type="EC" id="2.4.1.21" evidence="1"/>
<dbReference type="EMBL" id="CP000607">
    <property type="protein sequence ID" value="ABP36308.1"/>
    <property type="molecule type" value="Genomic_DNA"/>
</dbReference>
<dbReference type="SMR" id="A4SCU9"/>
<dbReference type="STRING" id="290318.Cvib_0286"/>
<dbReference type="CAZy" id="GT5">
    <property type="family name" value="Glycosyltransferase Family 5"/>
</dbReference>
<dbReference type="KEGG" id="pvi:Cvib_0286"/>
<dbReference type="eggNOG" id="COG0297">
    <property type="taxonomic scope" value="Bacteria"/>
</dbReference>
<dbReference type="HOGENOM" id="CLU_009583_18_0_10"/>
<dbReference type="OrthoDB" id="9808590at2"/>
<dbReference type="UniPathway" id="UPA00164"/>
<dbReference type="GO" id="GO:0009011">
    <property type="term" value="F:alpha-1,4-glucan glucosyltransferase (ADP-glucose donor) activity"/>
    <property type="evidence" value="ECO:0007669"/>
    <property type="project" value="UniProtKB-UniRule"/>
</dbReference>
<dbReference type="GO" id="GO:0004373">
    <property type="term" value="F:alpha-1,4-glucan glucosyltransferase (UDP-glucose donor) activity"/>
    <property type="evidence" value="ECO:0007669"/>
    <property type="project" value="InterPro"/>
</dbReference>
<dbReference type="GO" id="GO:0005978">
    <property type="term" value="P:glycogen biosynthetic process"/>
    <property type="evidence" value="ECO:0007669"/>
    <property type="project" value="UniProtKB-UniRule"/>
</dbReference>
<dbReference type="CDD" id="cd03791">
    <property type="entry name" value="GT5_Glycogen_synthase_DULL1-like"/>
    <property type="match status" value="1"/>
</dbReference>
<dbReference type="Gene3D" id="3.40.50.2000">
    <property type="entry name" value="Glycogen Phosphorylase B"/>
    <property type="match status" value="2"/>
</dbReference>
<dbReference type="HAMAP" id="MF_00484">
    <property type="entry name" value="Glycogen_synth"/>
    <property type="match status" value="1"/>
</dbReference>
<dbReference type="InterPro" id="IPR001296">
    <property type="entry name" value="Glyco_trans_1"/>
</dbReference>
<dbReference type="InterPro" id="IPR011835">
    <property type="entry name" value="GS/SS"/>
</dbReference>
<dbReference type="InterPro" id="IPR013534">
    <property type="entry name" value="Starch_synth_cat_dom"/>
</dbReference>
<dbReference type="NCBIfam" id="TIGR02095">
    <property type="entry name" value="glgA"/>
    <property type="match status" value="1"/>
</dbReference>
<dbReference type="NCBIfam" id="NF010698">
    <property type="entry name" value="PRK14098.1"/>
    <property type="match status" value="1"/>
</dbReference>
<dbReference type="PANTHER" id="PTHR45825:SF11">
    <property type="entry name" value="ALPHA AMYLASE DOMAIN-CONTAINING PROTEIN"/>
    <property type="match status" value="1"/>
</dbReference>
<dbReference type="PANTHER" id="PTHR45825">
    <property type="entry name" value="GRANULE-BOUND STARCH SYNTHASE 1, CHLOROPLASTIC/AMYLOPLASTIC"/>
    <property type="match status" value="1"/>
</dbReference>
<dbReference type="Pfam" id="PF08323">
    <property type="entry name" value="Glyco_transf_5"/>
    <property type="match status" value="1"/>
</dbReference>
<dbReference type="Pfam" id="PF00534">
    <property type="entry name" value="Glycos_transf_1"/>
    <property type="match status" value="1"/>
</dbReference>
<dbReference type="SUPFAM" id="SSF53756">
    <property type="entry name" value="UDP-Glycosyltransferase/glycogen phosphorylase"/>
    <property type="match status" value="1"/>
</dbReference>
<proteinExistence type="inferred from homology"/>
<keyword id="KW-0320">Glycogen biosynthesis</keyword>
<keyword id="KW-0328">Glycosyltransferase</keyword>
<keyword id="KW-0808">Transferase</keyword>
<evidence type="ECO:0000255" key="1">
    <source>
        <dbReference type="HAMAP-Rule" id="MF_00484"/>
    </source>
</evidence>